<protein>
    <recommendedName>
        <fullName evidence="4">ESX-1 secretion-associated protein EspH</fullName>
    </recommendedName>
</protein>
<keyword id="KW-1185">Reference proteome</keyword>
<feature type="chain" id="PRO_0000394146" description="ESX-1 secretion-associated protein EspH">
    <location>
        <begin position="1"/>
        <end position="183"/>
    </location>
</feature>
<feature type="region of interest" description="Disordered" evidence="1">
    <location>
        <begin position="1"/>
        <end position="32"/>
    </location>
</feature>
<feature type="compositionally biased region" description="Acidic residues" evidence="1">
    <location>
        <begin position="1"/>
        <end position="16"/>
    </location>
</feature>
<reference key="1">
    <citation type="journal article" date="1998" name="Nature">
        <title>Deciphering the biology of Mycobacterium tuberculosis from the complete genome sequence.</title>
        <authorList>
            <person name="Cole S.T."/>
            <person name="Brosch R."/>
            <person name="Parkhill J."/>
            <person name="Garnier T."/>
            <person name="Churcher C.M."/>
            <person name="Harris D.E."/>
            <person name="Gordon S.V."/>
            <person name="Eiglmeier K."/>
            <person name="Gas S."/>
            <person name="Barry C.E. III"/>
            <person name="Tekaia F."/>
            <person name="Badcock K."/>
            <person name="Basham D."/>
            <person name="Brown D."/>
            <person name="Chillingworth T."/>
            <person name="Connor R."/>
            <person name="Davies R.M."/>
            <person name="Devlin K."/>
            <person name="Feltwell T."/>
            <person name="Gentles S."/>
            <person name="Hamlin N."/>
            <person name="Holroyd S."/>
            <person name="Hornsby T."/>
            <person name="Jagels K."/>
            <person name="Krogh A."/>
            <person name="McLean J."/>
            <person name="Moule S."/>
            <person name="Murphy L.D."/>
            <person name="Oliver S."/>
            <person name="Osborne J."/>
            <person name="Quail M.A."/>
            <person name="Rajandream M.A."/>
            <person name="Rogers J."/>
            <person name="Rutter S."/>
            <person name="Seeger K."/>
            <person name="Skelton S."/>
            <person name="Squares S."/>
            <person name="Squares R."/>
            <person name="Sulston J.E."/>
            <person name="Taylor K."/>
            <person name="Whitehead S."/>
            <person name="Barrell B.G."/>
        </authorList>
    </citation>
    <scope>NUCLEOTIDE SEQUENCE [LARGE SCALE GENOMIC DNA]</scope>
    <source>
        <strain>ATCC 25618 / H37Rv</strain>
    </source>
</reference>
<reference key="2">
    <citation type="journal article" date="2006" name="Infect. Immun.">
        <title>Dissection of ESAT-6 system 1 of Mycobacterium tuberculosis and impact on immunogenicity and virulence.</title>
        <authorList>
            <person name="Brodin P."/>
            <person name="Majlessi L."/>
            <person name="Marsollier L."/>
            <person name="de Jonge M.I."/>
            <person name="Bottai D."/>
            <person name="Demangel C."/>
            <person name="Hinds J."/>
            <person name="Neyrolles O."/>
            <person name="Butcher P.D."/>
            <person name="Leclerc C."/>
            <person name="Cole S.T."/>
            <person name="Brosch R."/>
        </authorList>
    </citation>
    <scope>DISRUPTION PHENOTYPE</scope>
</reference>
<reference key="3">
    <citation type="journal article" date="2009" name="PLoS Pathog.">
        <title>Systematic genetic nomenclature for type VII secretion systems.</title>
        <authorList>
            <person name="Bitter W."/>
            <person name="Houben E.N."/>
            <person name="Bottai D."/>
            <person name="Brodin P."/>
            <person name="Brown E.J."/>
            <person name="Cox J.S."/>
            <person name="Derbyshire K."/>
            <person name="Fortune S.M."/>
            <person name="Gao L.Y."/>
            <person name="Liu J."/>
            <person name="Gey van Pittius N.C."/>
            <person name="Pym A.S."/>
            <person name="Rubin E.J."/>
            <person name="Sherman D.R."/>
            <person name="Cole S.T."/>
            <person name="Brosch R."/>
        </authorList>
    </citation>
    <scope>GENE NAME</scope>
</reference>
<reference key="4">
    <citation type="journal article" date="2011" name="Mol. Cell. Proteomics">
        <title>Proteogenomic analysis of Mycobacterium tuberculosis by high resolution mass spectrometry.</title>
        <authorList>
            <person name="Kelkar D.S."/>
            <person name="Kumar D."/>
            <person name="Kumar P."/>
            <person name="Balakrishnan L."/>
            <person name="Muthusamy B."/>
            <person name="Yadav A.K."/>
            <person name="Shrivastava P."/>
            <person name="Marimuthu A."/>
            <person name="Anand S."/>
            <person name="Sundaram H."/>
            <person name="Kingsbury R."/>
            <person name="Harsha H.C."/>
            <person name="Nair B."/>
            <person name="Prasad T.S."/>
            <person name="Chauhan D.S."/>
            <person name="Katoch K."/>
            <person name="Katoch V.M."/>
            <person name="Kumar P."/>
            <person name="Chaerkady R."/>
            <person name="Ramachandran S."/>
            <person name="Dash D."/>
            <person name="Pandey A."/>
        </authorList>
    </citation>
    <scope>IDENTIFICATION BY MASS SPECTROMETRY [LARGE SCALE ANALYSIS]</scope>
    <source>
        <strain>ATCC 25618 / H37Rv</strain>
    </source>
</reference>
<gene>
    <name evidence="3" type="primary">espH</name>
    <name type="ordered locus">Rv3867</name>
</gene>
<name>ESPH_MYCTU</name>
<evidence type="ECO:0000256" key="1">
    <source>
        <dbReference type="SAM" id="MobiDB-lite"/>
    </source>
</evidence>
<evidence type="ECO:0000269" key="2">
    <source>
    </source>
</evidence>
<evidence type="ECO:0000303" key="3">
    <source>
    </source>
</evidence>
<evidence type="ECO:0000305" key="4"/>
<organism>
    <name type="scientific">Mycobacterium tuberculosis (strain ATCC 25618 / H37Rv)</name>
    <dbReference type="NCBI Taxonomy" id="83332"/>
    <lineage>
        <taxon>Bacteria</taxon>
        <taxon>Bacillati</taxon>
        <taxon>Actinomycetota</taxon>
        <taxon>Actinomycetes</taxon>
        <taxon>Mycobacteriales</taxon>
        <taxon>Mycobacteriaceae</taxon>
        <taxon>Mycobacterium</taxon>
        <taxon>Mycobacterium tuberculosis complex</taxon>
    </lineage>
</organism>
<proteinExistence type="evidence at protein level"/>
<dbReference type="EMBL" id="AL123456">
    <property type="protein sequence ID" value="CCP46696.1"/>
    <property type="molecule type" value="Genomic_DNA"/>
</dbReference>
<dbReference type="PIR" id="A70802">
    <property type="entry name" value="A70802"/>
</dbReference>
<dbReference type="RefSeq" id="NP_218384.1">
    <property type="nucleotide sequence ID" value="NC_000962.3"/>
</dbReference>
<dbReference type="RefSeq" id="WP_003399844.1">
    <property type="nucleotide sequence ID" value="NZ_NVQJ01000074.1"/>
</dbReference>
<dbReference type="SMR" id="O69732"/>
<dbReference type="STRING" id="83332.Rv3867"/>
<dbReference type="PaxDb" id="83332-Rv3867"/>
<dbReference type="DNASU" id="886203"/>
<dbReference type="GeneID" id="45427871"/>
<dbReference type="GeneID" id="886203"/>
<dbReference type="KEGG" id="mtu:Rv3867"/>
<dbReference type="KEGG" id="mtv:RVBD_3867"/>
<dbReference type="TubercuList" id="Rv3867"/>
<dbReference type="eggNOG" id="ENOG5031M2V">
    <property type="taxonomic scope" value="Bacteria"/>
</dbReference>
<dbReference type="InParanoid" id="O69732"/>
<dbReference type="OrthoDB" id="4641051at2"/>
<dbReference type="Proteomes" id="UP000001584">
    <property type="component" value="Chromosome"/>
</dbReference>
<dbReference type="GO" id="GO:0005886">
    <property type="term" value="C:plasma membrane"/>
    <property type="evidence" value="ECO:0007005"/>
    <property type="project" value="MTBBASE"/>
</dbReference>
<dbReference type="GO" id="GO:0046677">
    <property type="term" value="P:response to antibiotic"/>
    <property type="evidence" value="ECO:0000270"/>
    <property type="project" value="MTBBASE"/>
</dbReference>
<dbReference type="GO" id="GO:0052167">
    <property type="term" value="P:symbiont-mediated perturbation of host innate immune response"/>
    <property type="evidence" value="ECO:0000314"/>
    <property type="project" value="MTBBASE"/>
</dbReference>
<sequence>MVDPPGNDDDHGDLDALDFSAAHTNEASPLDALDDYAPVQTDDAEGDLDALHALTERDEEPELELFTVTNPQGSVSVSTLMDGRIQHVELTDKATSMSEAQLADEIFVIADLARQKARASQYTFMVENIGELTDEDAEGSALLREFVGMTLNLPTPEEAAAAEAEVFATRYDVDYTSRYKADD</sequence>
<comment type="disruption phenotype">
    <text evidence="2">Inactivation does not abolish EsxA (ESAT-6) secretion, EsxA-specific immunogenicity and enhanced virulence.</text>
</comment>
<accession>O69732</accession>
<accession>L0TGU5</accession>